<comment type="function">
    <text evidence="1">Cleaves peptides in various proteins in a process that requires ATP hydrolysis. Has a chymotrypsin-like activity. Plays a major role in the degradation of misfolded proteins.</text>
</comment>
<comment type="catalytic activity">
    <reaction evidence="1">
        <text>Hydrolysis of proteins to small peptides in the presence of ATP and magnesium. alpha-casein is the usual test substrate. In the absence of ATP, only oligopeptides shorter than five residues are hydrolyzed (such as succinyl-Leu-Tyr-|-NHMec, and Leu-Tyr-Leu-|-Tyr-Trp, in which cleavage of the -Tyr-|-Leu- and -Tyr-|-Trp bonds also occurs).</text>
        <dbReference type="EC" id="3.4.21.92"/>
    </reaction>
</comment>
<comment type="subunit">
    <text evidence="1">Fourteen ClpP subunits assemble into 2 heptameric rings which stack back to back to give a disk-like structure with a central cavity, resembling the structure of eukaryotic proteasomes.</text>
</comment>
<comment type="subcellular location">
    <subcellularLocation>
        <location evidence="1">Cytoplasm</location>
    </subcellularLocation>
</comment>
<comment type="similarity">
    <text evidence="1">Belongs to the peptidase S14 family.</text>
</comment>
<reference key="1">
    <citation type="journal article" date="2001" name="Genome Res.">
        <title>The complete genome sequence of the lactic acid bacterium Lactococcus lactis ssp. lactis IL1403.</title>
        <authorList>
            <person name="Bolotin A."/>
            <person name="Wincker P."/>
            <person name="Mauger S."/>
            <person name="Jaillon O."/>
            <person name="Malarme K."/>
            <person name="Weissenbach J."/>
            <person name="Ehrlich S.D."/>
            <person name="Sorokin A."/>
        </authorList>
    </citation>
    <scope>NUCLEOTIDE SEQUENCE [LARGE SCALE GENOMIC DNA]</scope>
    <source>
        <strain>IL1403</strain>
    </source>
</reference>
<accession>Q9CHQ3</accession>
<keyword id="KW-0963">Cytoplasm</keyword>
<keyword id="KW-0378">Hydrolase</keyword>
<keyword id="KW-0645">Protease</keyword>
<keyword id="KW-1185">Reference proteome</keyword>
<keyword id="KW-0720">Serine protease</keyword>
<protein>
    <recommendedName>
        <fullName evidence="1">ATP-dependent Clp protease proteolytic subunit</fullName>
        <ecNumber evidence="1">3.4.21.92</ecNumber>
    </recommendedName>
    <alternativeName>
        <fullName evidence="1">Endopeptidase Clp</fullName>
    </alternativeName>
</protein>
<sequence length="199" mass="22082">MGYLVPTVIEQSSRGERAYDIYSRLLKDRIIMLTGPVEDGMANSIIAQLLFLDAQDNTKDIYLYVNTPGGSVSAGLAIVDTMNFIKSDVQTIVMGMAASMGTIIASSGTKGKRFMLPNAEYLIHQPMGGTGQGTQQTDMAIVAEQLLKTRKRLEQILADNSNRSLEQIHKDAERDHWMDAKETLEYGFIDEIMENNSLK</sequence>
<proteinExistence type="inferred from homology"/>
<feature type="chain" id="PRO_0000179573" description="ATP-dependent Clp protease proteolytic subunit">
    <location>
        <begin position="1"/>
        <end position="199"/>
    </location>
</feature>
<feature type="active site" description="Nucleophile" evidence="1">
    <location>
        <position position="99"/>
    </location>
</feature>
<feature type="active site" evidence="1">
    <location>
        <position position="124"/>
    </location>
</feature>
<organism>
    <name type="scientific">Lactococcus lactis subsp. lactis (strain IL1403)</name>
    <name type="common">Streptococcus lactis</name>
    <dbReference type="NCBI Taxonomy" id="272623"/>
    <lineage>
        <taxon>Bacteria</taxon>
        <taxon>Bacillati</taxon>
        <taxon>Bacillota</taxon>
        <taxon>Bacilli</taxon>
        <taxon>Lactobacillales</taxon>
        <taxon>Streptococcaceae</taxon>
        <taxon>Lactococcus</taxon>
    </lineage>
</organism>
<gene>
    <name evidence="1" type="primary">clpP</name>
    <name type="ordered locus">LL0673</name>
    <name type="ORF">L72391</name>
</gene>
<dbReference type="EC" id="3.4.21.92" evidence="1"/>
<dbReference type="EMBL" id="AE005176">
    <property type="protein sequence ID" value="AAK04771.1"/>
    <property type="molecule type" value="Genomic_DNA"/>
</dbReference>
<dbReference type="PIR" id="A86709">
    <property type="entry name" value="A86709"/>
</dbReference>
<dbReference type="RefSeq" id="NP_266829.1">
    <property type="nucleotide sequence ID" value="NC_002662.1"/>
</dbReference>
<dbReference type="RefSeq" id="WP_003129593.1">
    <property type="nucleotide sequence ID" value="NC_002662.1"/>
</dbReference>
<dbReference type="SMR" id="Q9CHQ3"/>
<dbReference type="MEROPS" id="S14.001"/>
<dbReference type="PaxDb" id="272623-L72391"/>
<dbReference type="EnsemblBacteria" id="AAK04771">
    <property type="protein sequence ID" value="AAK04771"/>
    <property type="gene ID" value="L72391"/>
</dbReference>
<dbReference type="KEGG" id="lla:L72391"/>
<dbReference type="PATRIC" id="fig|272623.7.peg.720"/>
<dbReference type="eggNOG" id="COG0740">
    <property type="taxonomic scope" value="Bacteria"/>
</dbReference>
<dbReference type="HOGENOM" id="CLU_058707_3_2_9"/>
<dbReference type="OrthoDB" id="9802800at2"/>
<dbReference type="Proteomes" id="UP000002196">
    <property type="component" value="Chromosome"/>
</dbReference>
<dbReference type="GO" id="GO:0005737">
    <property type="term" value="C:cytoplasm"/>
    <property type="evidence" value="ECO:0007669"/>
    <property type="project" value="UniProtKB-SubCell"/>
</dbReference>
<dbReference type="GO" id="GO:0009368">
    <property type="term" value="C:endopeptidase Clp complex"/>
    <property type="evidence" value="ECO:0007669"/>
    <property type="project" value="TreeGrafter"/>
</dbReference>
<dbReference type="GO" id="GO:0004176">
    <property type="term" value="F:ATP-dependent peptidase activity"/>
    <property type="evidence" value="ECO:0007669"/>
    <property type="project" value="InterPro"/>
</dbReference>
<dbReference type="GO" id="GO:0051117">
    <property type="term" value="F:ATPase binding"/>
    <property type="evidence" value="ECO:0007669"/>
    <property type="project" value="TreeGrafter"/>
</dbReference>
<dbReference type="GO" id="GO:0004252">
    <property type="term" value="F:serine-type endopeptidase activity"/>
    <property type="evidence" value="ECO:0007669"/>
    <property type="project" value="UniProtKB-UniRule"/>
</dbReference>
<dbReference type="GO" id="GO:0006515">
    <property type="term" value="P:protein quality control for misfolded or incompletely synthesized proteins"/>
    <property type="evidence" value="ECO:0007669"/>
    <property type="project" value="TreeGrafter"/>
</dbReference>
<dbReference type="CDD" id="cd07017">
    <property type="entry name" value="S14_ClpP_2"/>
    <property type="match status" value="1"/>
</dbReference>
<dbReference type="FunFam" id="3.90.226.10:FF:000014">
    <property type="entry name" value="ATP-dependent Clp protease proteolytic subunit"/>
    <property type="match status" value="1"/>
</dbReference>
<dbReference type="Gene3D" id="3.90.226.10">
    <property type="entry name" value="2-enoyl-CoA Hydratase, Chain A, domain 1"/>
    <property type="match status" value="1"/>
</dbReference>
<dbReference type="HAMAP" id="MF_00444">
    <property type="entry name" value="ClpP"/>
    <property type="match status" value="1"/>
</dbReference>
<dbReference type="InterPro" id="IPR001907">
    <property type="entry name" value="ClpP"/>
</dbReference>
<dbReference type="InterPro" id="IPR029045">
    <property type="entry name" value="ClpP/crotonase-like_dom_sf"/>
</dbReference>
<dbReference type="InterPro" id="IPR023562">
    <property type="entry name" value="ClpP/TepA"/>
</dbReference>
<dbReference type="InterPro" id="IPR033135">
    <property type="entry name" value="ClpP_His_AS"/>
</dbReference>
<dbReference type="InterPro" id="IPR018215">
    <property type="entry name" value="ClpP_Ser_AS"/>
</dbReference>
<dbReference type="NCBIfam" id="NF001368">
    <property type="entry name" value="PRK00277.1"/>
    <property type="match status" value="1"/>
</dbReference>
<dbReference type="NCBIfam" id="NF009205">
    <property type="entry name" value="PRK12553.1"/>
    <property type="match status" value="1"/>
</dbReference>
<dbReference type="PANTHER" id="PTHR10381">
    <property type="entry name" value="ATP-DEPENDENT CLP PROTEASE PROTEOLYTIC SUBUNIT"/>
    <property type="match status" value="1"/>
</dbReference>
<dbReference type="PANTHER" id="PTHR10381:SF70">
    <property type="entry name" value="ATP-DEPENDENT CLP PROTEASE PROTEOLYTIC SUBUNIT"/>
    <property type="match status" value="1"/>
</dbReference>
<dbReference type="Pfam" id="PF00574">
    <property type="entry name" value="CLP_protease"/>
    <property type="match status" value="1"/>
</dbReference>
<dbReference type="PRINTS" id="PR00127">
    <property type="entry name" value="CLPPROTEASEP"/>
</dbReference>
<dbReference type="SUPFAM" id="SSF52096">
    <property type="entry name" value="ClpP/crotonase"/>
    <property type="match status" value="1"/>
</dbReference>
<dbReference type="PROSITE" id="PS00382">
    <property type="entry name" value="CLP_PROTEASE_HIS"/>
    <property type="match status" value="1"/>
</dbReference>
<dbReference type="PROSITE" id="PS00381">
    <property type="entry name" value="CLP_PROTEASE_SER"/>
    <property type="match status" value="1"/>
</dbReference>
<evidence type="ECO:0000255" key="1">
    <source>
        <dbReference type="HAMAP-Rule" id="MF_00444"/>
    </source>
</evidence>
<name>CLPP_LACLA</name>